<sequence length="316" mass="36015">MAAPGEIILEDVPASVNLFRTLQDQVTKVTAHVQALTQKVRSGIYNTDKGLSFLELKDQLLLFYLQDLTHLMLEKTNGKSIKGNPGILRLVELRTVLEKMRPIDQKLKYQIDKLVRASVTGSLGENDPLRFKPNPQNLISKLSEADEGESDSGEDCAESGNAKKPQSKVKKYIPPRLAPVHYDDTEAEREHRIIERAKKLALSSSTIRELKEQYSDAPEEIREGRAYHMMRHDKEEQHRINHEESMMVRLNMTRKEKARKKRVLAMTSQLNSLTHFSDISALTGGEGRTDDLVPSVKKSRKGPKKSKKRKGFRKRH</sequence>
<comment type="function">
    <text evidence="1 2">Part of the small subunit (SSU) processome, first precursor of the small eukaryotic ribosomal subunit. During the assembly of the SSU processome in the nucleolus, many ribosome biogenesis factors, an RNA chaperone and ribosomal proteins associate with the nascent pre-rRNA and work in concert to generate RNA folding, modifications, rearrangements and cleavage as well as targeted degradation of pre-ribosomal RNA by the RNA exosome. Its dissociation from the complex determines the transition from state pre-A1 to state pre-A1* (By similarity). May inhibit mRNA translation (By similarity).</text>
</comment>
<comment type="subunit">
    <text evidence="1">Part of the small subunit (SSU) processome, composed of more than 70 proteins and the RNA chaperone small nucleolar RNA (snoRNA) U3.</text>
</comment>
<comment type="subcellular location">
    <subcellularLocation>
        <location evidence="2">Nucleus</location>
    </subcellularLocation>
    <subcellularLocation>
        <location evidence="1">Nucleus</location>
        <location evidence="1">Nucleolus</location>
    </subcellularLocation>
    <subcellularLocation>
        <location evidence="1">Chromosome</location>
        <location evidence="1">Centromere</location>
    </subcellularLocation>
    <subcellularLocation>
        <location evidence="2">Cytoplasm</location>
    </subcellularLocation>
    <subcellularLocation>
        <location evidence="2">Cell projection</location>
        <location evidence="2">Axon</location>
    </subcellularLocation>
    <subcellularLocation>
        <location evidence="2">Cell projection</location>
        <location evidence="2">Dendrite</location>
    </subcellularLocation>
    <subcellularLocation>
        <location evidence="2">Cell projection</location>
        <location evidence="2">Filopodium</location>
    </subcellularLocation>
</comment>
<comment type="similarity">
    <text evidence="4">Belongs to the SAS10 family.</text>
</comment>
<comment type="sequence caution" evidence="4">
    <conflict type="erroneous initiation">
        <sequence resource="EMBL-CDS" id="AAH64878"/>
    </conflict>
    <text>Extended N-terminus.</text>
</comment>
<evidence type="ECO:0000250" key="1">
    <source>
        <dbReference type="UniProtKB" id="Q8NEJ9"/>
    </source>
</evidence>
<evidence type="ECO:0000250" key="2">
    <source>
        <dbReference type="UniProtKB" id="Q9DB96"/>
    </source>
</evidence>
<evidence type="ECO:0000256" key="3">
    <source>
        <dbReference type="SAM" id="MobiDB-lite"/>
    </source>
</evidence>
<evidence type="ECO:0000305" key="4"/>
<organism>
    <name type="scientific">Xenopus tropicalis</name>
    <name type="common">Western clawed frog</name>
    <name type="synonym">Silurana tropicalis</name>
    <dbReference type="NCBI Taxonomy" id="8364"/>
    <lineage>
        <taxon>Eukaryota</taxon>
        <taxon>Metazoa</taxon>
        <taxon>Chordata</taxon>
        <taxon>Craniata</taxon>
        <taxon>Vertebrata</taxon>
        <taxon>Euteleostomi</taxon>
        <taxon>Amphibia</taxon>
        <taxon>Batrachia</taxon>
        <taxon>Anura</taxon>
        <taxon>Pipoidea</taxon>
        <taxon>Pipidae</taxon>
        <taxon>Xenopodinae</taxon>
        <taxon>Xenopus</taxon>
        <taxon>Silurana</taxon>
    </lineage>
</organism>
<protein>
    <recommendedName>
        <fullName>Neuroguidin</fullName>
    </recommendedName>
    <alternativeName>
        <fullName>EIF4E-binding protein</fullName>
    </alternativeName>
</protein>
<feature type="chain" id="PRO_0000269250" description="Neuroguidin">
    <location>
        <begin position="1"/>
        <end position="316"/>
    </location>
</feature>
<feature type="region of interest" description="Disordered" evidence="3">
    <location>
        <begin position="143"/>
        <end position="172"/>
    </location>
</feature>
<feature type="region of interest" description="Disordered" evidence="3">
    <location>
        <begin position="280"/>
        <end position="316"/>
    </location>
</feature>
<feature type="compositionally biased region" description="Acidic residues" evidence="3">
    <location>
        <begin position="145"/>
        <end position="157"/>
    </location>
</feature>
<feature type="compositionally biased region" description="Basic residues" evidence="3">
    <location>
        <begin position="297"/>
        <end position="316"/>
    </location>
</feature>
<name>NGDN_XENTR</name>
<dbReference type="EMBL" id="CR760199">
    <property type="protein sequence ID" value="CAJ83037.1"/>
    <property type="molecule type" value="mRNA"/>
</dbReference>
<dbReference type="EMBL" id="BC064878">
    <property type="protein sequence ID" value="AAH64878.1"/>
    <property type="status" value="ALT_INIT"/>
    <property type="molecule type" value="mRNA"/>
</dbReference>
<dbReference type="RefSeq" id="NP_001032334.1">
    <property type="nucleotide sequence ID" value="NM_001037257.1"/>
</dbReference>
<dbReference type="SMR" id="Q28IV8"/>
<dbReference type="FunCoup" id="Q28IV8">
    <property type="interactions" value="3527"/>
</dbReference>
<dbReference type="STRING" id="8364.ENSXETP00000009668"/>
<dbReference type="PaxDb" id="8364-ENSXETP00000058341"/>
<dbReference type="GeneID" id="395016"/>
<dbReference type="KEGG" id="xtr:395016"/>
<dbReference type="AGR" id="Xenbase:XB-GENE-946309"/>
<dbReference type="CTD" id="25983"/>
<dbReference type="Xenbase" id="XB-GENE-946309">
    <property type="gene designation" value="ngdn"/>
</dbReference>
<dbReference type="eggNOG" id="KOG3117">
    <property type="taxonomic scope" value="Eukaryota"/>
</dbReference>
<dbReference type="HOGENOM" id="CLU_031901_0_0_1"/>
<dbReference type="InParanoid" id="Q28IV8"/>
<dbReference type="OrthoDB" id="203440at2759"/>
<dbReference type="Proteomes" id="UP000008143">
    <property type="component" value="Chromosome 1"/>
</dbReference>
<dbReference type="Bgee" id="ENSXETG00000014562">
    <property type="expression patterns" value="Expressed in egg cell and 13 other cell types or tissues"/>
</dbReference>
<dbReference type="ExpressionAtlas" id="Q28IV8">
    <property type="expression patterns" value="baseline"/>
</dbReference>
<dbReference type="GO" id="GO:0030424">
    <property type="term" value="C:axon"/>
    <property type="evidence" value="ECO:0007669"/>
    <property type="project" value="UniProtKB-SubCell"/>
</dbReference>
<dbReference type="GO" id="GO:0000775">
    <property type="term" value="C:chromosome, centromeric region"/>
    <property type="evidence" value="ECO:0007669"/>
    <property type="project" value="UniProtKB-SubCell"/>
</dbReference>
<dbReference type="GO" id="GO:0005737">
    <property type="term" value="C:cytoplasm"/>
    <property type="evidence" value="ECO:0007669"/>
    <property type="project" value="UniProtKB-SubCell"/>
</dbReference>
<dbReference type="GO" id="GO:0030425">
    <property type="term" value="C:dendrite"/>
    <property type="evidence" value="ECO:0007669"/>
    <property type="project" value="UniProtKB-SubCell"/>
</dbReference>
<dbReference type="GO" id="GO:0030175">
    <property type="term" value="C:filopodium"/>
    <property type="evidence" value="ECO:0007669"/>
    <property type="project" value="UniProtKB-SubCell"/>
</dbReference>
<dbReference type="GO" id="GO:0005730">
    <property type="term" value="C:nucleolus"/>
    <property type="evidence" value="ECO:0007669"/>
    <property type="project" value="UniProtKB-SubCell"/>
</dbReference>
<dbReference type="GO" id="GO:0032040">
    <property type="term" value="C:small-subunit processome"/>
    <property type="evidence" value="ECO:0000250"/>
    <property type="project" value="UniProtKB"/>
</dbReference>
<dbReference type="GO" id="GO:0006417">
    <property type="term" value="P:regulation of translation"/>
    <property type="evidence" value="ECO:0007669"/>
    <property type="project" value="UniProtKB-KW"/>
</dbReference>
<dbReference type="GO" id="GO:0042274">
    <property type="term" value="P:ribosomal small subunit biogenesis"/>
    <property type="evidence" value="ECO:0000250"/>
    <property type="project" value="UniProtKB"/>
</dbReference>
<dbReference type="InterPro" id="IPR007146">
    <property type="entry name" value="Sas10/Utp3/C1D"/>
</dbReference>
<dbReference type="PANTHER" id="PTHR13237:SF9">
    <property type="entry name" value="NEUROGUIDIN"/>
    <property type="match status" value="1"/>
</dbReference>
<dbReference type="PANTHER" id="PTHR13237">
    <property type="entry name" value="SOMETHING ABOUT SILENCING PROTEIN 10-RELATED"/>
    <property type="match status" value="1"/>
</dbReference>
<dbReference type="Pfam" id="PF04000">
    <property type="entry name" value="Sas10_Utp3"/>
    <property type="match status" value="1"/>
</dbReference>
<reference key="1">
    <citation type="submission" date="2006-06" db="EMBL/GenBank/DDBJ databases">
        <authorList>
            <consortium name="Sanger Xenopus tropicalis EST/cDNA project"/>
        </authorList>
    </citation>
    <scope>NUCLEOTIDE SEQUENCE [LARGE SCALE MRNA]</scope>
    <source>
        <tissue>Neurula</tissue>
    </source>
</reference>
<reference key="2">
    <citation type="submission" date="2005-04" db="EMBL/GenBank/DDBJ databases">
        <authorList>
            <consortium name="NIH - Xenopus Gene Collection (XGC) project"/>
        </authorList>
    </citation>
    <scope>NUCLEOTIDE SEQUENCE [LARGE SCALE MRNA]</scope>
    <source>
        <tissue>Embryo</tissue>
    </source>
</reference>
<proteinExistence type="evidence at transcript level"/>
<keyword id="KW-0966">Cell projection</keyword>
<keyword id="KW-0137">Centromere</keyword>
<keyword id="KW-0158">Chromosome</keyword>
<keyword id="KW-0963">Cytoplasm</keyword>
<keyword id="KW-0539">Nucleus</keyword>
<keyword id="KW-1185">Reference proteome</keyword>
<keyword id="KW-0678">Repressor</keyword>
<keyword id="KW-0810">Translation regulation</keyword>
<gene>
    <name type="primary">ngdn</name>
    <name type="ORF">TNeu114c02.1</name>
</gene>
<accession>Q28IV8</accession>
<accession>Q6P1T3</accession>